<keyword id="KW-1185">Reference proteome</keyword>
<keyword id="KW-0687">Ribonucleoprotein</keyword>
<keyword id="KW-0689">Ribosomal protein</keyword>
<comment type="function">
    <text evidence="1">This protein is one of the early assembly proteins of the 50S ribosomal subunit, although it is not seen to bind rRNA by itself. It is important during the early stages of 50S assembly.</text>
</comment>
<comment type="subunit">
    <text evidence="1">Part of the 50S ribosomal subunit.</text>
</comment>
<comment type="similarity">
    <text evidence="1">Belongs to the universal ribosomal protein uL13 family.</text>
</comment>
<evidence type="ECO:0000255" key="1">
    <source>
        <dbReference type="HAMAP-Rule" id="MF_01366"/>
    </source>
</evidence>
<evidence type="ECO:0000305" key="2"/>
<proteinExistence type="inferred from homology"/>
<organism>
    <name type="scientific">Lachnospira eligens (strain ATCC 27750 / DSM 3376 / VPI C15-48 / C15-B4)</name>
    <name type="common">Eubacterium eligens</name>
    <dbReference type="NCBI Taxonomy" id="515620"/>
    <lineage>
        <taxon>Bacteria</taxon>
        <taxon>Bacillati</taxon>
        <taxon>Bacillota</taxon>
        <taxon>Clostridia</taxon>
        <taxon>Lachnospirales</taxon>
        <taxon>Lachnospiraceae</taxon>
        <taxon>Lachnospira</taxon>
    </lineage>
</organism>
<name>RL13_LACE2</name>
<sequence>MKTYMASASTIERKWYVVDAADYTLGRLASQVAAVLRGKNKPTYTPFLDCGDNVIVINADKVKVTGKKLDQKVYYSHSDYVGGLKETTLKEMMEKKPEKVIELAVKGMLPKGPLGRQMFTKLHVYAGPDHEQAAQKPEVLKF</sequence>
<gene>
    <name evidence="1" type="primary">rplM</name>
    <name type="ordered locus">EUBELI_00332</name>
</gene>
<reference key="1">
    <citation type="journal article" date="2009" name="Proc. Natl. Acad. Sci. U.S.A.">
        <title>Characterizing a model human gut microbiota composed of members of its two dominant bacterial phyla.</title>
        <authorList>
            <person name="Mahowald M.A."/>
            <person name="Rey F.E."/>
            <person name="Seedorf H."/>
            <person name="Turnbaugh P.J."/>
            <person name="Fulton R.S."/>
            <person name="Wollam A."/>
            <person name="Shah N."/>
            <person name="Wang C."/>
            <person name="Magrini V."/>
            <person name="Wilson R.K."/>
            <person name="Cantarel B.L."/>
            <person name="Coutinho P.M."/>
            <person name="Henrissat B."/>
            <person name="Crock L.W."/>
            <person name="Russell A."/>
            <person name="Verberkmoes N.C."/>
            <person name="Hettich R.L."/>
            <person name="Gordon J.I."/>
        </authorList>
    </citation>
    <scope>NUCLEOTIDE SEQUENCE [LARGE SCALE GENOMIC DNA]</scope>
    <source>
        <strain>ATCC 27750 / DSM 3376 / VPI C15-48 / C15-B4</strain>
    </source>
</reference>
<protein>
    <recommendedName>
        <fullName evidence="1">Large ribosomal subunit protein uL13</fullName>
    </recommendedName>
    <alternativeName>
        <fullName evidence="2">50S ribosomal protein L13</fullName>
    </alternativeName>
</protein>
<feature type="chain" id="PRO_1000214950" description="Large ribosomal subunit protein uL13">
    <location>
        <begin position="1"/>
        <end position="142"/>
    </location>
</feature>
<accession>C4Z2W3</accession>
<dbReference type="EMBL" id="CP001104">
    <property type="protein sequence ID" value="ACR71368.1"/>
    <property type="molecule type" value="Genomic_DNA"/>
</dbReference>
<dbReference type="RefSeq" id="WP_012738605.1">
    <property type="nucleotide sequence ID" value="NC_012778.1"/>
</dbReference>
<dbReference type="SMR" id="C4Z2W3"/>
<dbReference type="STRING" id="515620.EUBELI_00332"/>
<dbReference type="GeneID" id="41355106"/>
<dbReference type="KEGG" id="eel:EUBELI_00332"/>
<dbReference type="eggNOG" id="COG0102">
    <property type="taxonomic scope" value="Bacteria"/>
</dbReference>
<dbReference type="HOGENOM" id="CLU_082184_2_2_9"/>
<dbReference type="Proteomes" id="UP000001476">
    <property type="component" value="Chromosome"/>
</dbReference>
<dbReference type="GO" id="GO:0022625">
    <property type="term" value="C:cytosolic large ribosomal subunit"/>
    <property type="evidence" value="ECO:0007669"/>
    <property type="project" value="TreeGrafter"/>
</dbReference>
<dbReference type="GO" id="GO:0003729">
    <property type="term" value="F:mRNA binding"/>
    <property type="evidence" value="ECO:0007669"/>
    <property type="project" value="TreeGrafter"/>
</dbReference>
<dbReference type="GO" id="GO:0003735">
    <property type="term" value="F:structural constituent of ribosome"/>
    <property type="evidence" value="ECO:0007669"/>
    <property type="project" value="InterPro"/>
</dbReference>
<dbReference type="GO" id="GO:0017148">
    <property type="term" value="P:negative regulation of translation"/>
    <property type="evidence" value="ECO:0007669"/>
    <property type="project" value="TreeGrafter"/>
</dbReference>
<dbReference type="GO" id="GO:0006412">
    <property type="term" value="P:translation"/>
    <property type="evidence" value="ECO:0007669"/>
    <property type="project" value="UniProtKB-UniRule"/>
</dbReference>
<dbReference type="CDD" id="cd00392">
    <property type="entry name" value="Ribosomal_L13"/>
    <property type="match status" value="1"/>
</dbReference>
<dbReference type="FunFam" id="3.90.1180.10:FF:000001">
    <property type="entry name" value="50S ribosomal protein L13"/>
    <property type="match status" value="1"/>
</dbReference>
<dbReference type="Gene3D" id="3.90.1180.10">
    <property type="entry name" value="Ribosomal protein L13"/>
    <property type="match status" value="1"/>
</dbReference>
<dbReference type="HAMAP" id="MF_01366">
    <property type="entry name" value="Ribosomal_uL13"/>
    <property type="match status" value="1"/>
</dbReference>
<dbReference type="InterPro" id="IPR005822">
    <property type="entry name" value="Ribosomal_uL13"/>
</dbReference>
<dbReference type="InterPro" id="IPR005823">
    <property type="entry name" value="Ribosomal_uL13_bac-type"/>
</dbReference>
<dbReference type="InterPro" id="IPR023563">
    <property type="entry name" value="Ribosomal_uL13_CS"/>
</dbReference>
<dbReference type="InterPro" id="IPR036899">
    <property type="entry name" value="Ribosomal_uL13_sf"/>
</dbReference>
<dbReference type="NCBIfam" id="TIGR01066">
    <property type="entry name" value="rplM_bact"/>
    <property type="match status" value="1"/>
</dbReference>
<dbReference type="PANTHER" id="PTHR11545:SF2">
    <property type="entry name" value="LARGE RIBOSOMAL SUBUNIT PROTEIN UL13M"/>
    <property type="match status" value="1"/>
</dbReference>
<dbReference type="PANTHER" id="PTHR11545">
    <property type="entry name" value="RIBOSOMAL PROTEIN L13"/>
    <property type="match status" value="1"/>
</dbReference>
<dbReference type="Pfam" id="PF00572">
    <property type="entry name" value="Ribosomal_L13"/>
    <property type="match status" value="1"/>
</dbReference>
<dbReference type="PIRSF" id="PIRSF002181">
    <property type="entry name" value="Ribosomal_L13"/>
    <property type="match status" value="1"/>
</dbReference>
<dbReference type="SUPFAM" id="SSF52161">
    <property type="entry name" value="Ribosomal protein L13"/>
    <property type="match status" value="1"/>
</dbReference>
<dbReference type="PROSITE" id="PS00783">
    <property type="entry name" value="RIBOSOMAL_L13"/>
    <property type="match status" value="1"/>
</dbReference>